<accession>Q2L088</accession>
<sequence length="428" mass="45968">MSAIVDIIGREILDSRGNPTVECDVLLESGAMGRAAVPSGASTGTREAIELRDGDKNRYFGKGVLRAVENLNTEISEALMGLDAQEQTFVDRTLIELDGTDSKERLGANAMLAASMAVARAAADESGLSLYRYFGGSGPMSMPVPMMNVINGGAHANNTLDLQELMILPVGAASFREALRWGAEVFHVLKKLIHAQGMSTAVGDEGGFAPNLANHEAAIQLILKAITEAGYEPGTQIALGLDCASSEFYRDGKYTLAGEGGVSLSSQEFANLLATWCDKYPIISIEDGMAENDWDGWKLLTDQLGKKVQLVGDDLFVTNTRILREGIQKGVANSILIKINQIGTLTETFAAIEMAKRAGYTAVVSHRSGETEDSTIADIAVATNAMQIKTGSLSRSDRMAKYNQLLRIEEELAEVASYPGIEAFYNLR</sequence>
<feature type="chain" id="PRO_0000267003" description="Enolase">
    <location>
        <begin position="1"/>
        <end position="428"/>
    </location>
</feature>
<feature type="active site" description="Proton donor" evidence="1">
    <location>
        <position position="205"/>
    </location>
</feature>
<feature type="active site" description="Proton acceptor" evidence="1">
    <location>
        <position position="338"/>
    </location>
</feature>
<feature type="binding site" evidence="1">
    <location>
        <position position="163"/>
    </location>
    <ligand>
        <name>(2R)-2-phosphoglycerate</name>
        <dbReference type="ChEBI" id="CHEBI:58289"/>
    </ligand>
</feature>
<feature type="binding site" evidence="1">
    <location>
        <position position="242"/>
    </location>
    <ligand>
        <name>Mg(2+)</name>
        <dbReference type="ChEBI" id="CHEBI:18420"/>
    </ligand>
</feature>
<feature type="binding site" evidence="1">
    <location>
        <position position="286"/>
    </location>
    <ligand>
        <name>Mg(2+)</name>
        <dbReference type="ChEBI" id="CHEBI:18420"/>
    </ligand>
</feature>
<feature type="binding site" evidence="1">
    <location>
        <position position="313"/>
    </location>
    <ligand>
        <name>Mg(2+)</name>
        <dbReference type="ChEBI" id="CHEBI:18420"/>
    </ligand>
</feature>
<feature type="binding site" evidence="1">
    <location>
        <position position="338"/>
    </location>
    <ligand>
        <name>(2R)-2-phosphoglycerate</name>
        <dbReference type="ChEBI" id="CHEBI:58289"/>
    </ligand>
</feature>
<feature type="binding site" evidence="1">
    <location>
        <position position="367"/>
    </location>
    <ligand>
        <name>(2R)-2-phosphoglycerate</name>
        <dbReference type="ChEBI" id="CHEBI:58289"/>
    </ligand>
</feature>
<feature type="binding site" evidence="1">
    <location>
        <position position="368"/>
    </location>
    <ligand>
        <name>(2R)-2-phosphoglycerate</name>
        <dbReference type="ChEBI" id="CHEBI:58289"/>
    </ligand>
</feature>
<feature type="binding site" evidence="1">
    <location>
        <position position="389"/>
    </location>
    <ligand>
        <name>(2R)-2-phosphoglycerate</name>
        <dbReference type="ChEBI" id="CHEBI:58289"/>
    </ligand>
</feature>
<comment type="function">
    <text evidence="1">Catalyzes the reversible conversion of 2-phosphoglycerate (2-PG) into phosphoenolpyruvate (PEP). It is essential for the degradation of carbohydrates via glycolysis.</text>
</comment>
<comment type="catalytic activity">
    <reaction evidence="1">
        <text>(2R)-2-phosphoglycerate = phosphoenolpyruvate + H2O</text>
        <dbReference type="Rhea" id="RHEA:10164"/>
        <dbReference type="ChEBI" id="CHEBI:15377"/>
        <dbReference type="ChEBI" id="CHEBI:58289"/>
        <dbReference type="ChEBI" id="CHEBI:58702"/>
        <dbReference type="EC" id="4.2.1.11"/>
    </reaction>
</comment>
<comment type="cofactor">
    <cofactor evidence="1">
        <name>Mg(2+)</name>
        <dbReference type="ChEBI" id="CHEBI:18420"/>
    </cofactor>
    <text evidence="1">Binds a second Mg(2+) ion via substrate during catalysis.</text>
</comment>
<comment type="pathway">
    <text evidence="1">Carbohydrate degradation; glycolysis; pyruvate from D-glyceraldehyde 3-phosphate: step 4/5.</text>
</comment>
<comment type="subcellular location">
    <subcellularLocation>
        <location evidence="1">Cytoplasm</location>
    </subcellularLocation>
    <subcellularLocation>
        <location evidence="1">Secreted</location>
    </subcellularLocation>
    <subcellularLocation>
        <location evidence="1">Cell surface</location>
    </subcellularLocation>
    <text evidence="1">Fractions of enolase are present in both the cytoplasm and on the cell surface.</text>
</comment>
<comment type="similarity">
    <text evidence="1">Belongs to the enolase family.</text>
</comment>
<proteinExistence type="inferred from homology"/>
<evidence type="ECO:0000255" key="1">
    <source>
        <dbReference type="HAMAP-Rule" id="MF_00318"/>
    </source>
</evidence>
<protein>
    <recommendedName>
        <fullName evidence="1">Enolase</fullName>
        <ecNumber evidence="1">4.2.1.11</ecNumber>
    </recommendedName>
    <alternativeName>
        <fullName evidence="1">2-phospho-D-glycerate hydro-lyase</fullName>
    </alternativeName>
    <alternativeName>
        <fullName evidence="1">2-phosphoglycerate dehydratase</fullName>
    </alternativeName>
</protein>
<gene>
    <name evidence="1" type="primary">eno</name>
    <name type="ordered locus">BAV1166</name>
</gene>
<reference key="1">
    <citation type="journal article" date="2006" name="J. Bacteriol.">
        <title>Comparison of the genome sequence of the poultry pathogen Bordetella avium with those of B. bronchiseptica, B. pertussis, and B. parapertussis reveals extensive diversity in surface structures associated with host interaction.</title>
        <authorList>
            <person name="Sebaihia M."/>
            <person name="Preston A."/>
            <person name="Maskell D.J."/>
            <person name="Kuzmiak H."/>
            <person name="Connell T.D."/>
            <person name="King N.D."/>
            <person name="Orndorff P.E."/>
            <person name="Miyamoto D.M."/>
            <person name="Thomson N.R."/>
            <person name="Harris D."/>
            <person name="Goble A."/>
            <person name="Lord A."/>
            <person name="Murphy L."/>
            <person name="Quail M.A."/>
            <person name="Rutter S."/>
            <person name="Squares R."/>
            <person name="Squares S."/>
            <person name="Woodward J."/>
            <person name="Parkhill J."/>
            <person name="Temple L.M."/>
        </authorList>
    </citation>
    <scope>NUCLEOTIDE SEQUENCE [LARGE SCALE GENOMIC DNA]</scope>
    <source>
        <strain>197N</strain>
    </source>
</reference>
<organism>
    <name type="scientific">Bordetella avium (strain 197N)</name>
    <dbReference type="NCBI Taxonomy" id="360910"/>
    <lineage>
        <taxon>Bacteria</taxon>
        <taxon>Pseudomonadati</taxon>
        <taxon>Pseudomonadota</taxon>
        <taxon>Betaproteobacteria</taxon>
        <taxon>Burkholderiales</taxon>
        <taxon>Alcaligenaceae</taxon>
        <taxon>Bordetella</taxon>
    </lineage>
</organism>
<keyword id="KW-0963">Cytoplasm</keyword>
<keyword id="KW-0324">Glycolysis</keyword>
<keyword id="KW-0456">Lyase</keyword>
<keyword id="KW-0460">Magnesium</keyword>
<keyword id="KW-0479">Metal-binding</keyword>
<keyword id="KW-1185">Reference proteome</keyword>
<keyword id="KW-0964">Secreted</keyword>
<dbReference type="EC" id="4.2.1.11" evidence="1"/>
<dbReference type="EMBL" id="AM167904">
    <property type="protein sequence ID" value="CAJ48774.1"/>
    <property type="molecule type" value="Genomic_DNA"/>
</dbReference>
<dbReference type="RefSeq" id="WP_012416848.1">
    <property type="nucleotide sequence ID" value="NC_010645.1"/>
</dbReference>
<dbReference type="SMR" id="Q2L088"/>
<dbReference type="STRING" id="360910.BAV1166"/>
<dbReference type="GeneID" id="92935642"/>
<dbReference type="KEGG" id="bav:BAV1166"/>
<dbReference type="eggNOG" id="COG0148">
    <property type="taxonomic scope" value="Bacteria"/>
</dbReference>
<dbReference type="HOGENOM" id="CLU_031223_2_1_4"/>
<dbReference type="OrthoDB" id="9804716at2"/>
<dbReference type="UniPathway" id="UPA00109">
    <property type="reaction ID" value="UER00187"/>
</dbReference>
<dbReference type="Proteomes" id="UP000001977">
    <property type="component" value="Chromosome"/>
</dbReference>
<dbReference type="GO" id="GO:0009986">
    <property type="term" value="C:cell surface"/>
    <property type="evidence" value="ECO:0007669"/>
    <property type="project" value="UniProtKB-SubCell"/>
</dbReference>
<dbReference type="GO" id="GO:0005576">
    <property type="term" value="C:extracellular region"/>
    <property type="evidence" value="ECO:0007669"/>
    <property type="project" value="UniProtKB-SubCell"/>
</dbReference>
<dbReference type="GO" id="GO:0000015">
    <property type="term" value="C:phosphopyruvate hydratase complex"/>
    <property type="evidence" value="ECO:0007669"/>
    <property type="project" value="InterPro"/>
</dbReference>
<dbReference type="GO" id="GO:0000287">
    <property type="term" value="F:magnesium ion binding"/>
    <property type="evidence" value="ECO:0007669"/>
    <property type="project" value="UniProtKB-UniRule"/>
</dbReference>
<dbReference type="GO" id="GO:0004634">
    <property type="term" value="F:phosphopyruvate hydratase activity"/>
    <property type="evidence" value="ECO:0007669"/>
    <property type="project" value="UniProtKB-UniRule"/>
</dbReference>
<dbReference type="GO" id="GO:0006096">
    <property type="term" value="P:glycolytic process"/>
    <property type="evidence" value="ECO:0007669"/>
    <property type="project" value="UniProtKB-UniRule"/>
</dbReference>
<dbReference type="CDD" id="cd03313">
    <property type="entry name" value="enolase"/>
    <property type="match status" value="1"/>
</dbReference>
<dbReference type="FunFam" id="3.20.20.120:FF:000001">
    <property type="entry name" value="Enolase"/>
    <property type="match status" value="1"/>
</dbReference>
<dbReference type="FunFam" id="3.30.390.10:FF:000001">
    <property type="entry name" value="Enolase"/>
    <property type="match status" value="1"/>
</dbReference>
<dbReference type="Gene3D" id="3.20.20.120">
    <property type="entry name" value="Enolase-like C-terminal domain"/>
    <property type="match status" value="1"/>
</dbReference>
<dbReference type="Gene3D" id="3.30.390.10">
    <property type="entry name" value="Enolase-like, N-terminal domain"/>
    <property type="match status" value="1"/>
</dbReference>
<dbReference type="HAMAP" id="MF_00318">
    <property type="entry name" value="Enolase"/>
    <property type="match status" value="1"/>
</dbReference>
<dbReference type="InterPro" id="IPR000941">
    <property type="entry name" value="Enolase"/>
</dbReference>
<dbReference type="InterPro" id="IPR036849">
    <property type="entry name" value="Enolase-like_C_sf"/>
</dbReference>
<dbReference type="InterPro" id="IPR029017">
    <property type="entry name" value="Enolase-like_N"/>
</dbReference>
<dbReference type="InterPro" id="IPR020810">
    <property type="entry name" value="Enolase_C"/>
</dbReference>
<dbReference type="InterPro" id="IPR020809">
    <property type="entry name" value="Enolase_CS"/>
</dbReference>
<dbReference type="InterPro" id="IPR020811">
    <property type="entry name" value="Enolase_N"/>
</dbReference>
<dbReference type="NCBIfam" id="TIGR01060">
    <property type="entry name" value="eno"/>
    <property type="match status" value="1"/>
</dbReference>
<dbReference type="PANTHER" id="PTHR11902">
    <property type="entry name" value="ENOLASE"/>
    <property type="match status" value="1"/>
</dbReference>
<dbReference type="PANTHER" id="PTHR11902:SF1">
    <property type="entry name" value="ENOLASE"/>
    <property type="match status" value="1"/>
</dbReference>
<dbReference type="Pfam" id="PF00113">
    <property type="entry name" value="Enolase_C"/>
    <property type="match status" value="1"/>
</dbReference>
<dbReference type="Pfam" id="PF03952">
    <property type="entry name" value="Enolase_N"/>
    <property type="match status" value="1"/>
</dbReference>
<dbReference type="PIRSF" id="PIRSF001400">
    <property type="entry name" value="Enolase"/>
    <property type="match status" value="1"/>
</dbReference>
<dbReference type="PRINTS" id="PR00148">
    <property type="entry name" value="ENOLASE"/>
</dbReference>
<dbReference type="SFLD" id="SFLDF00002">
    <property type="entry name" value="enolase"/>
    <property type="match status" value="1"/>
</dbReference>
<dbReference type="SFLD" id="SFLDG00178">
    <property type="entry name" value="enolase"/>
    <property type="match status" value="1"/>
</dbReference>
<dbReference type="SMART" id="SM01192">
    <property type="entry name" value="Enolase_C"/>
    <property type="match status" value="1"/>
</dbReference>
<dbReference type="SMART" id="SM01193">
    <property type="entry name" value="Enolase_N"/>
    <property type="match status" value="1"/>
</dbReference>
<dbReference type="SUPFAM" id="SSF51604">
    <property type="entry name" value="Enolase C-terminal domain-like"/>
    <property type="match status" value="1"/>
</dbReference>
<dbReference type="SUPFAM" id="SSF54826">
    <property type="entry name" value="Enolase N-terminal domain-like"/>
    <property type="match status" value="1"/>
</dbReference>
<dbReference type="PROSITE" id="PS00164">
    <property type="entry name" value="ENOLASE"/>
    <property type="match status" value="1"/>
</dbReference>
<name>ENO_BORA1</name>